<name>C71DD_MENPI</name>
<reference key="1">
    <citation type="journal article" date="1999" name="Arch. Biochem. Biophys.">
        <title>Regiospecific cytochrome P450 limonene hydroxylases from mint (Mentha) species: cDNA isolation, characterization, and functional expression of (-)-4S-limonene-3-hydroxylase and (-)-4S-limonene-6-hydroxylase.</title>
        <authorList>
            <person name="Lupien S."/>
            <person name="Karp F."/>
            <person name="Wildung M."/>
            <person name="Croteau R."/>
        </authorList>
    </citation>
    <scope>NUCLEOTIDE SEQUENCE [MRNA]</scope>
    <scope>FUNCTION</scope>
    <scope>CATALYTIC ACTIVITY</scope>
    <source>
        <strain>cv. Black Mitcham</strain>
    </source>
</reference>
<reference key="2">
    <citation type="journal article" date="2001" name="Arch. Biochem. Biophys.">
        <title>Hydroxylation of limonene enantiomers and analogs by recombinant (-)-limonene 3- and 6-hydroxylases from mint (Mentha) species: evidence for catalysis within sterically constrained active sites.</title>
        <authorList>
            <person name="Wuest M."/>
            <person name="Little D.B."/>
            <person name="Schalk M."/>
            <person name="Croteau R."/>
        </authorList>
    </citation>
    <scope>FUNCTION</scope>
    <scope>CATALYTIC ACTIVITY</scope>
</reference>
<keyword id="KW-0256">Endoplasmic reticulum</keyword>
<keyword id="KW-0349">Heme</keyword>
<keyword id="KW-0408">Iron</keyword>
<keyword id="KW-0472">Membrane</keyword>
<keyword id="KW-0479">Metal-binding</keyword>
<keyword id="KW-0503">Monooxygenase</keyword>
<keyword id="KW-0560">Oxidoreductase</keyword>
<keyword id="KW-0735">Signal-anchor</keyword>
<keyword id="KW-0812">Transmembrane</keyword>
<keyword id="KW-1133">Transmembrane helix</keyword>
<evidence type="ECO:0000250" key="1"/>
<evidence type="ECO:0000255" key="2"/>
<evidence type="ECO:0000269" key="3">
    <source>
    </source>
</evidence>
<evidence type="ECO:0000269" key="4">
    <source>
    </source>
</evidence>
<evidence type="ECO:0000305" key="5"/>
<feature type="chain" id="PRO_0000389500" description="Cytochrome P450 71D13">
    <location>
        <begin position="1"/>
        <end position="500"/>
    </location>
</feature>
<feature type="transmembrane region" description="Helical; Signal-anchor for type II membrane protein" evidence="2">
    <location>
        <begin position="3"/>
        <end position="23"/>
    </location>
</feature>
<feature type="binding site" description="axial binding residue" evidence="1">
    <location>
        <position position="439"/>
    </location>
    <ligand>
        <name>heme</name>
        <dbReference type="ChEBI" id="CHEBI:30413"/>
    </ligand>
    <ligandPart>
        <name>Fe</name>
        <dbReference type="ChEBI" id="CHEBI:18248"/>
    </ligandPart>
</feature>
<gene>
    <name type="primary">CYP71D13</name>
</gene>
<accession>Q9XHE7</accession>
<dbReference type="EC" id="1.14.14.99" evidence="3 4"/>
<dbReference type="EMBL" id="AF124816">
    <property type="protein sequence ID" value="AAD44151.1"/>
    <property type="molecule type" value="mRNA"/>
</dbReference>
<dbReference type="SMR" id="Q9XHE7"/>
<dbReference type="KEGG" id="ag:AAD44151"/>
<dbReference type="BioCyc" id="MetaCyc:MONOMER-6762"/>
<dbReference type="BRENDA" id="1.14.13.47">
    <property type="organism ID" value="3222"/>
</dbReference>
<dbReference type="BRENDA" id="1.14.14.99">
    <property type="organism ID" value="3222"/>
</dbReference>
<dbReference type="GO" id="GO:0005789">
    <property type="term" value="C:endoplasmic reticulum membrane"/>
    <property type="evidence" value="ECO:0007669"/>
    <property type="project" value="UniProtKB-SubCell"/>
</dbReference>
<dbReference type="GO" id="GO:0018674">
    <property type="term" value="F:(S)-limonene 3-monooxygenase activity"/>
    <property type="evidence" value="ECO:0000314"/>
    <property type="project" value="UniProtKB"/>
</dbReference>
<dbReference type="GO" id="GO:0020037">
    <property type="term" value="F:heme binding"/>
    <property type="evidence" value="ECO:0007669"/>
    <property type="project" value="InterPro"/>
</dbReference>
<dbReference type="GO" id="GO:0005506">
    <property type="term" value="F:iron ion binding"/>
    <property type="evidence" value="ECO:0007669"/>
    <property type="project" value="InterPro"/>
</dbReference>
<dbReference type="CDD" id="cd11072">
    <property type="entry name" value="CYP71-like"/>
    <property type="match status" value="1"/>
</dbReference>
<dbReference type="FunFam" id="1.10.630.10:FF:000043">
    <property type="entry name" value="Cytochrome P450 99A2"/>
    <property type="match status" value="1"/>
</dbReference>
<dbReference type="Gene3D" id="1.10.630.10">
    <property type="entry name" value="Cytochrome P450"/>
    <property type="match status" value="1"/>
</dbReference>
<dbReference type="InterPro" id="IPR052306">
    <property type="entry name" value="CYP450_71D"/>
</dbReference>
<dbReference type="InterPro" id="IPR001128">
    <property type="entry name" value="Cyt_P450"/>
</dbReference>
<dbReference type="InterPro" id="IPR017972">
    <property type="entry name" value="Cyt_P450_CS"/>
</dbReference>
<dbReference type="InterPro" id="IPR002401">
    <property type="entry name" value="Cyt_P450_E_grp-I"/>
</dbReference>
<dbReference type="InterPro" id="IPR036396">
    <property type="entry name" value="Cyt_P450_sf"/>
</dbReference>
<dbReference type="PANTHER" id="PTHR47953:SF16">
    <property type="entry name" value="CYTOCHROME P450 71D8"/>
    <property type="match status" value="1"/>
</dbReference>
<dbReference type="PANTHER" id="PTHR47953">
    <property type="entry name" value="OS08G0105600 PROTEIN"/>
    <property type="match status" value="1"/>
</dbReference>
<dbReference type="Pfam" id="PF00067">
    <property type="entry name" value="p450"/>
    <property type="match status" value="1"/>
</dbReference>
<dbReference type="PRINTS" id="PR00463">
    <property type="entry name" value="EP450I"/>
</dbReference>
<dbReference type="PRINTS" id="PR00385">
    <property type="entry name" value="P450"/>
</dbReference>
<dbReference type="SUPFAM" id="SSF48264">
    <property type="entry name" value="Cytochrome P450"/>
    <property type="match status" value="1"/>
</dbReference>
<dbReference type="PROSITE" id="PS00086">
    <property type="entry name" value="CYTOCHROME_P450"/>
    <property type="match status" value="1"/>
</dbReference>
<proteinExistence type="evidence at protein level"/>
<organism>
    <name type="scientific">Mentha piperita</name>
    <name type="common">Peppermint</name>
    <name type="synonym">Mentha aquatica x Mentha spicata</name>
    <dbReference type="NCBI Taxonomy" id="34256"/>
    <lineage>
        <taxon>Eukaryota</taxon>
        <taxon>Viridiplantae</taxon>
        <taxon>Streptophyta</taxon>
        <taxon>Embryophyta</taxon>
        <taxon>Tracheophyta</taxon>
        <taxon>Spermatophyta</taxon>
        <taxon>Magnoliopsida</taxon>
        <taxon>eudicotyledons</taxon>
        <taxon>Gunneridae</taxon>
        <taxon>Pentapetalae</taxon>
        <taxon>asterids</taxon>
        <taxon>lamiids</taxon>
        <taxon>Lamiales</taxon>
        <taxon>Lamiaceae</taxon>
        <taxon>Nepetoideae</taxon>
        <taxon>Mentheae</taxon>
        <taxon>Menthinae</taxon>
        <taxon>Mentha</taxon>
    </lineage>
</organism>
<comment type="function">
    <text evidence="3 4">Hydroxylates (-)-(4S)-limonene to (-)-trans-isopiperitenol, a precursor of (-)-menthol, responsible for the cooling sensation of peppermint.</text>
</comment>
<comment type="catalytic activity">
    <reaction evidence="3 4">
        <text>(4S)-limonene + reduced [NADPH--hemoprotein reductase] + O2 = (1S,6R)-isopiperitenol + oxidized [NADPH--hemoprotein reductase] + H2O + H(+)</text>
        <dbReference type="Rhea" id="RHEA:15129"/>
        <dbReference type="Rhea" id="RHEA-COMP:11964"/>
        <dbReference type="Rhea" id="RHEA-COMP:11965"/>
        <dbReference type="ChEBI" id="CHEBI:15377"/>
        <dbReference type="ChEBI" id="CHEBI:15378"/>
        <dbReference type="ChEBI" id="CHEBI:15379"/>
        <dbReference type="ChEBI" id="CHEBI:15383"/>
        <dbReference type="ChEBI" id="CHEBI:15406"/>
        <dbReference type="ChEBI" id="CHEBI:57618"/>
        <dbReference type="ChEBI" id="CHEBI:58210"/>
        <dbReference type="EC" id="1.14.14.99"/>
    </reaction>
</comment>
<comment type="cofactor">
    <cofactor evidence="1">
        <name>heme</name>
        <dbReference type="ChEBI" id="CHEBI:30413"/>
    </cofactor>
</comment>
<comment type="subcellular location">
    <subcellularLocation>
        <location evidence="5">Endoplasmic reticulum membrane</location>
        <topology evidence="5">Single-pass type II membrane protein</topology>
    </subcellularLocation>
</comment>
<comment type="similarity">
    <text evidence="5">Belongs to the cytochrome P450 family.</text>
</comment>
<protein>
    <recommendedName>
        <fullName>Cytochrome P450 71D13</fullName>
        <ecNumber evidence="3 4">1.14.14.99</ecNumber>
    </recommendedName>
    <alternativeName>
        <fullName>(-)-(4S)-Limonene-3-hydroxylase</fullName>
    </alternativeName>
    <alternativeName>
        <fullName>Cytochrome P450 isoform PM17</fullName>
    </alternativeName>
</protein>
<sequence length="500" mass="56601">MELQISSAIIILVVTYTISLLIIKQWRKPKPQENLPPGPPKLPLIGHLHLLWGKLPQHALASVAKQYGPVAHVQLGEVFSVVLSSREATKEAMKLVDPACADRFESIGTKIMWYDNDDIIFSPYSVHWRQMRKICVSELLSARNVRSFGFIRQDEVSRLLGHLRSSAAAGEAVDLTERIATLTCSIICRAAFGSVIRDHEELVELVKDALSMASGFELADMFPSSKLLNLLCWNKSKLWRMRRRVDAILEAIVEEHKLKKSGEFGGEDIIDVLFRMQKDSQIKVPITTNAIKAFIFDTFSAGTETSSTTTLWVMAELMRNPEVMAKAQAEVRAALKGKTDWDVDDVQELKYMKSVVKETMRMHPPIPLIPRSCREECEVNGYTIPNKARIMINVWSMGRNPLYWEKPETFWPERFDQVSRDFMGNDFEFIPFGAGRRICPGLNFGLANVEVPLAQLLYHFDWKLAEGMNPSDMDMSEAEGLTGIRKNNLLLVPTPYDPSS</sequence>